<accession>P56054</accession>
<name>RL32_HELPY</name>
<sequence length="48" mass="5661">MAVPDRRVSKTRAAKRRTHYSVKLAKPIKAKDGTWKLPHHINKFTKEY</sequence>
<evidence type="ECO:0000250" key="1"/>
<evidence type="ECO:0000256" key="2">
    <source>
        <dbReference type="SAM" id="MobiDB-lite"/>
    </source>
</evidence>
<evidence type="ECO:0000305" key="3"/>
<reference key="1">
    <citation type="journal article" date="1997" name="Nature">
        <title>The complete genome sequence of the gastric pathogen Helicobacter pylori.</title>
        <authorList>
            <person name="Tomb J.-F."/>
            <person name="White O."/>
            <person name="Kerlavage A.R."/>
            <person name="Clayton R.A."/>
            <person name="Sutton G.G."/>
            <person name="Fleischmann R.D."/>
            <person name="Ketchum K.A."/>
            <person name="Klenk H.-P."/>
            <person name="Gill S.R."/>
            <person name="Dougherty B.A."/>
            <person name="Nelson K.E."/>
            <person name="Quackenbush J."/>
            <person name="Zhou L."/>
            <person name="Kirkness E.F."/>
            <person name="Peterson S.N."/>
            <person name="Loftus B.J."/>
            <person name="Richardson D.L."/>
            <person name="Dodson R.J."/>
            <person name="Khalak H.G."/>
            <person name="Glodek A."/>
            <person name="McKenney K."/>
            <person name="FitzGerald L.M."/>
            <person name="Lee N."/>
            <person name="Adams M.D."/>
            <person name="Hickey E.K."/>
            <person name="Berg D.E."/>
            <person name="Gocayne J.D."/>
            <person name="Utterback T.R."/>
            <person name="Peterson J.D."/>
            <person name="Kelley J.M."/>
            <person name="Cotton M.D."/>
            <person name="Weidman J.F."/>
            <person name="Fujii C."/>
            <person name="Bowman C."/>
            <person name="Watthey L."/>
            <person name="Wallin E."/>
            <person name="Hayes W.S."/>
            <person name="Borodovsky M."/>
            <person name="Karp P.D."/>
            <person name="Smith H.O."/>
            <person name="Fraser C.M."/>
            <person name="Venter J.C."/>
        </authorList>
    </citation>
    <scope>NUCLEOTIDE SEQUENCE [LARGE SCALE GENOMIC DNA]</scope>
    <source>
        <strain>ATCC 700392 / 26695</strain>
    </source>
</reference>
<organism>
    <name type="scientific">Helicobacter pylori (strain ATCC 700392 / 26695)</name>
    <name type="common">Campylobacter pylori</name>
    <dbReference type="NCBI Taxonomy" id="85962"/>
    <lineage>
        <taxon>Bacteria</taxon>
        <taxon>Pseudomonadati</taxon>
        <taxon>Campylobacterota</taxon>
        <taxon>Epsilonproteobacteria</taxon>
        <taxon>Campylobacterales</taxon>
        <taxon>Helicobacteraceae</taxon>
        <taxon>Helicobacter</taxon>
    </lineage>
</organism>
<gene>
    <name type="primary">rpmF</name>
    <name type="ordered locus">HP_0200</name>
</gene>
<comment type="similarity">
    <text evidence="3">Belongs to the bacterial ribosomal protein bL32 family.</text>
</comment>
<proteinExistence type="inferred from homology"/>
<feature type="initiator methionine" description="Removed" evidence="1">
    <location>
        <position position="1"/>
    </location>
</feature>
<feature type="chain" id="PRO_0000172348" description="Large ribosomal subunit protein bL32">
    <location>
        <begin position="2"/>
        <end position="48"/>
    </location>
</feature>
<feature type="region of interest" description="Disordered" evidence="2">
    <location>
        <begin position="1"/>
        <end position="20"/>
    </location>
</feature>
<feature type="compositionally biased region" description="Basic residues" evidence="2">
    <location>
        <begin position="9"/>
        <end position="20"/>
    </location>
</feature>
<dbReference type="EMBL" id="AE000511">
    <property type="protein sequence ID" value="AAD07272.1"/>
    <property type="molecule type" value="Genomic_DNA"/>
</dbReference>
<dbReference type="PIR" id="H64544">
    <property type="entry name" value="H64544"/>
</dbReference>
<dbReference type="RefSeq" id="NP_206999.1">
    <property type="nucleotide sequence ID" value="NC_000915.1"/>
</dbReference>
<dbReference type="RefSeq" id="WP_000290428.1">
    <property type="nucleotide sequence ID" value="NC_018939.1"/>
</dbReference>
<dbReference type="SMR" id="P56054"/>
<dbReference type="STRING" id="85962.HP_0200"/>
<dbReference type="PaxDb" id="85962-C694_00995"/>
<dbReference type="EnsemblBacteria" id="AAD07272">
    <property type="protein sequence ID" value="AAD07272"/>
    <property type="gene ID" value="HP_0200"/>
</dbReference>
<dbReference type="GeneID" id="31757893"/>
<dbReference type="KEGG" id="heo:C694_00995"/>
<dbReference type="KEGG" id="hpy:HP_0200"/>
<dbReference type="PATRIC" id="fig|85962.47.peg.215"/>
<dbReference type="eggNOG" id="COG0333">
    <property type="taxonomic scope" value="Bacteria"/>
</dbReference>
<dbReference type="InParanoid" id="P56054"/>
<dbReference type="OrthoDB" id="9801927at2"/>
<dbReference type="Proteomes" id="UP000000429">
    <property type="component" value="Chromosome"/>
</dbReference>
<dbReference type="GO" id="GO:0015934">
    <property type="term" value="C:large ribosomal subunit"/>
    <property type="evidence" value="ECO:0007669"/>
    <property type="project" value="InterPro"/>
</dbReference>
<dbReference type="GO" id="GO:0003735">
    <property type="term" value="F:structural constituent of ribosome"/>
    <property type="evidence" value="ECO:0007669"/>
    <property type="project" value="InterPro"/>
</dbReference>
<dbReference type="GO" id="GO:0006412">
    <property type="term" value="P:translation"/>
    <property type="evidence" value="ECO:0007669"/>
    <property type="project" value="UniProtKB-UniRule"/>
</dbReference>
<dbReference type="HAMAP" id="MF_00340">
    <property type="entry name" value="Ribosomal_bL32"/>
    <property type="match status" value="1"/>
</dbReference>
<dbReference type="InterPro" id="IPR002677">
    <property type="entry name" value="Ribosomal_bL32"/>
</dbReference>
<dbReference type="InterPro" id="IPR011332">
    <property type="entry name" value="Ribosomal_zn-bd"/>
</dbReference>
<dbReference type="NCBIfam" id="TIGR01031">
    <property type="entry name" value="rpmF_bact"/>
    <property type="match status" value="1"/>
</dbReference>
<dbReference type="Pfam" id="PF01783">
    <property type="entry name" value="Ribosomal_L32p"/>
    <property type="match status" value="1"/>
</dbReference>
<dbReference type="SUPFAM" id="SSF57829">
    <property type="entry name" value="Zn-binding ribosomal proteins"/>
    <property type="match status" value="1"/>
</dbReference>
<protein>
    <recommendedName>
        <fullName evidence="3">Large ribosomal subunit protein bL32</fullName>
    </recommendedName>
    <alternativeName>
        <fullName>50S ribosomal protein L32</fullName>
    </alternativeName>
</protein>
<keyword id="KW-1185">Reference proteome</keyword>
<keyword id="KW-0687">Ribonucleoprotein</keyword>
<keyword id="KW-0689">Ribosomal protein</keyword>